<proteinExistence type="inferred from homology"/>
<accession>Q5JGB7</accession>
<evidence type="ECO:0000255" key="1">
    <source>
        <dbReference type="HAMAP-Rule" id="MF_00814"/>
    </source>
</evidence>
<name>NAC_THEKO</name>
<feature type="chain" id="PRO_0000135610" description="Nascent polypeptide-associated complex protein">
    <location>
        <begin position="1"/>
        <end position="111"/>
    </location>
</feature>
<feature type="domain" description="NAC-A/B" evidence="1">
    <location>
        <begin position="3"/>
        <end position="72"/>
    </location>
</feature>
<gene>
    <name evidence="1" type="primary">nac</name>
    <name type="ordered locus">TK1973</name>
</gene>
<organism>
    <name type="scientific">Thermococcus kodakarensis (strain ATCC BAA-918 / JCM 12380 / KOD1)</name>
    <name type="common">Pyrococcus kodakaraensis (strain KOD1)</name>
    <dbReference type="NCBI Taxonomy" id="69014"/>
    <lineage>
        <taxon>Archaea</taxon>
        <taxon>Methanobacteriati</taxon>
        <taxon>Methanobacteriota</taxon>
        <taxon>Thermococci</taxon>
        <taxon>Thermococcales</taxon>
        <taxon>Thermococcaceae</taxon>
        <taxon>Thermococcus</taxon>
    </lineage>
</organism>
<reference key="1">
    <citation type="journal article" date="2005" name="Genome Res.">
        <title>Complete genome sequence of the hyperthermophilic archaeon Thermococcus kodakaraensis KOD1 and comparison with Pyrococcus genomes.</title>
        <authorList>
            <person name="Fukui T."/>
            <person name="Atomi H."/>
            <person name="Kanai T."/>
            <person name="Matsumi R."/>
            <person name="Fujiwara S."/>
            <person name="Imanaka T."/>
        </authorList>
    </citation>
    <scope>NUCLEOTIDE SEQUENCE [LARGE SCALE GENOMIC DNA]</scope>
    <source>
        <strain>ATCC BAA-918 / JCM 12380 / KOD1</strain>
    </source>
</reference>
<dbReference type="EMBL" id="AP006878">
    <property type="protein sequence ID" value="BAD86162.1"/>
    <property type="molecule type" value="Genomic_DNA"/>
</dbReference>
<dbReference type="RefSeq" id="WP_011250923.1">
    <property type="nucleotide sequence ID" value="NC_006624.1"/>
</dbReference>
<dbReference type="SMR" id="Q5JGB7"/>
<dbReference type="FunCoup" id="Q5JGB7">
    <property type="interactions" value="67"/>
</dbReference>
<dbReference type="STRING" id="69014.TK1973"/>
<dbReference type="EnsemblBacteria" id="BAD86162">
    <property type="protein sequence ID" value="BAD86162"/>
    <property type="gene ID" value="TK1973"/>
</dbReference>
<dbReference type="GeneID" id="78448508"/>
<dbReference type="KEGG" id="tko:TK1973"/>
<dbReference type="PATRIC" id="fig|69014.16.peg.1928"/>
<dbReference type="eggNOG" id="arCOG04061">
    <property type="taxonomic scope" value="Archaea"/>
</dbReference>
<dbReference type="HOGENOM" id="CLU_146475_0_0_2"/>
<dbReference type="InParanoid" id="Q5JGB7"/>
<dbReference type="OrthoDB" id="53273at2157"/>
<dbReference type="PhylomeDB" id="Q5JGB7"/>
<dbReference type="Proteomes" id="UP000000536">
    <property type="component" value="Chromosome"/>
</dbReference>
<dbReference type="GO" id="GO:0003723">
    <property type="term" value="F:RNA binding"/>
    <property type="evidence" value="ECO:0007669"/>
    <property type="project" value="UniProtKB-UniRule"/>
</dbReference>
<dbReference type="GO" id="GO:0015031">
    <property type="term" value="P:protein transport"/>
    <property type="evidence" value="ECO:0007669"/>
    <property type="project" value="UniProtKB-UniRule"/>
</dbReference>
<dbReference type="CDD" id="cd14359">
    <property type="entry name" value="UBA_AeNAC"/>
    <property type="match status" value="1"/>
</dbReference>
<dbReference type="Gene3D" id="1.10.8.10">
    <property type="entry name" value="DNA helicase RuvA subunit, C-terminal domain"/>
    <property type="match status" value="1"/>
</dbReference>
<dbReference type="Gene3D" id="2.20.70.30">
    <property type="entry name" value="Nascent polypeptide-associated complex domain"/>
    <property type="match status" value="1"/>
</dbReference>
<dbReference type="HAMAP" id="MF_00814">
    <property type="entry name" value="NAC_arch"/>
    <property type="match status" value="1"/>
</dbReference>
<dbReference type="InterPro" id="IPR044034">
    <property type="entry name" value="NAC-like_UBA"/>
</dbReference>
<dbReference type="InterPro" id="IPR038187">
    <property type="entry name" value="NAC_A/B_dom_sf"/>
</dbReference>
<dbReference type="InterPro" id="IPR005231">
    <property type="entry name" value="NAC_arc"/>
</dbReference>
<dbReference type="InterPro" id="IPR002715">
    <property type="entry name" value="Nas_poly-pep-assoc_cplx_dom"/>
</dbReference>
<dbReference type="InterPro" id="IPR009060">
    <property type="entry name" value="UBA-like_sf"/>
</dbReference>
<dbReference type="NCBIfam" id="TIGR00264">
    <property type="entry name" value="archaeal-type nascent polypeptide-associated complex protein"/>
    <property type="match status" value="1"/>
</dbReference>
<dbReference type="Pfam" id="PF01849">
    <property type="entry name" value="NAC"/>
    <property type="match status" value="1"/>
</dbReference>
<dbReference type="Pfam" id="PF19026">
    <property type="entry name" value="UBA_HYPK"/>
    <property type="match status" value="1"/>
</dbReference>
<dbReference type="SMART" id="SM01407">
    <property type="entry name" value="NAC"/>
    <property type="match status" value="1"/>
</dbReference>
<dbReference type="SUPFAM" id="SSF46934">
    <property type="entry name" value="UBA-like"/>
    <property type="match status" value="1"/>
</dbReference>
<dbReference type="PROSITE" id="PS51151">
    <property type="entry name" value="NAC_AB"/>
    <property type="match status" value="1"/>
</dbReference>
<sequence length="111" mass="12436">MMGMNPRQMKKLMKQLGIKMEELEGVEEVVLRMKGKEIILKEPAVTVMVVQGEKTYQIIPGSEEVREVLEISEDDIKLVMEQAGVDYDTAKKALEEAKGDLAEAILKLTEG</sequence>
<protein>
    <recommendedName>
        <fullName evidence="1">Nascent polypeptide-associated complex protein</fullName>
    </recommendedName>
</protein>
<comment type="function">
    <text evidence="1">Contacts the emerging nascent chain on the ribosome.</text>
</comment>
<comment type="subunit">
    <text evidence="1">Homodimer. Interacts with the ribosome. Binds ribosomal RNA.</text>
</comment>
<comment type="similarity">
    <text evidence="1">Belongs to the NAC-alpha family.</text>
</comment>
<keyword id="KW-0653">Protein transport</keyword>
<keyword id="KW-1185">Reference proteome</keyword>
<keyword id="KW-0694">RNA-binding</keyword>
<keyword id="KW-0813">Transport</keyword>